<evidence type="ECO:0000250" key="1">
    <source>
        <dbReference type="UniProtKB" id="Q1K8E7"/>
    </source>
</evidence>
<evidence type="ECO:0000255" key="2"/>
<evidence type="ECO:0000255" key="3">
    <source>
        <dbReference type="PROSITE-ProRule" id="PRU00094"/>
    </source>
</evidence>
<evidence type="ECO:0000256" key="4">
    <source>
        <dbReference type="SAM" id="MobiDB-lite"/>
    </source>
</evidence>
<evidence type="ECO:0000269" key="5">
    <source>
    </source>
</evidence>
<evidence type="ECO:0000269" key="6">
    <source>
    </source>
</evidence>
<evidence type="ECO:0000269" key="7">
    <source>
    </source>
</evidence>
<evidence type="ECO:0000269" key="8">
    <source>
    </source>
</evidence>
<evidence type="ECO:0000303" key="9">
    <source>
    </source>
</evidence>
<evidence type="ECO:0000305" key="10"/>
<proteinExistence type="evidence at transcript level"/>
<gene>
    <name evidence="9" type="primary">sreA</name>
    <name type="ORF">ANIA_00176</name>
</gene>
<organism>
    <name type="scientific">Emericella nidulans (strain FGSC A4 / ATCC 38163 / CBS 112.46 / NRRL 194 / M139)</name>
    <name type="common">Aspergillus nidulans</name>
    <dbReference type="NCBI Taxonomy" id="227321"/>
    <lineage>
        <taxon>Eukaryota</taxon>
        <taxon>Fungi</taxon>
        <taxon>Dikarya</taxon>
        <taxon>Ascomycota</taxon>
        <taxon>Pezizomycotina</taxon>
        <taxon>Eurotiomycetes</taxon>
        <taxon>Eurotiomycetidae</taxon>
        <taxon>Eurotiales</taxon>
        <taxon>Aspergillaceae</taxon>
        <taxon>Aspergillus</taxon>
        <taxon>Aspergillus subgen. Nidulantes</taxon>
    </lineage>
</organism>
<dbReference type="EMBL" id="AF095898">
    <property type="protein sequence ID" value="AAD25328.1"/>
    <property type="molecule type" value="Genomic_DNA"/>
</dbReference>
<dbReference type="EMBL" id="BN001308">
    <property type="protein sequence ID" value="CBF90036.1"/>
    <property type="molecule type" value="Genomic_DNA"/>
</dbReference>
<dbReference type="EMBL" id="AACD01000005">
    <property type="protein sequence ID" value="EAA66049.1"/>
    <property type="molecule type" value="Genomic_DNA"/>
</dbReference>
<dbReference type="RefSeq" id="XP_657780.1">
    <property type="nucleotide sequence ID" value="XM_652688.1"/>
</dbReference>
<dbReference type="SMR" id="G5EB20"/>
<dbReference type="STRING" id="227321.G5EB20"/>
<dbReference type="EnsemblFungi" id="CBF90036">
    <property type="protein sequence ID" value="CBF90036"/>
    <property type="gene ID" value="ANIA_00176"/>
</dbReference>
<dbReference type="GeneID" id="2875952"/>
<dbReference type="KEGG" id="ani:ANIA_00176"/>
<dbReference type="VEuPathDB" id="FungiDB:AN0176"/>
<dbReference type="eggNOG" id="KOG1601">
    <property type="taxonomic scope" value="Eukaryota"/>
</dbReference>
<dbReference type="HOGENOM" id="CLU_021761_1_0_1"/>
<dbReference type="InParanoid" id="G5EB20"/>
<dbReference type="OMA" id="CYRPTTM"/>
<dbReference type="OrthoDB" id="515401at2759"/>
<dbReference type="Proteomes" id="UP000000560">
    <property type="component" value="Chromosome VIII"/>
</dbReference>
<dbReference type="GO" id="GO:0005634">
    <property type="term" value="C:nucleus"/>
    <property type="evidence" value="ECO:0000318"/>
    <property type="project" value="GO_Central"/>
</dbReference>
<dbReference type="GO" id="GO:0000981">
    <property type="term" value="F:DNA-binding transcription factor activity, RNA polymerase II-specific"/>
    <property type="evidence" value="ECO:0000318"/>
    <property type="project" value="GO_Central"/>
</dbReference>
<dbReference type="GO" id="GO:0000978">
    <property type="term" value="F:RNA polymerase II cis-regulatory region sequence-specific DNA binding"/>
    <property type="evidence" value="ECO:0000318"/>
    <property type="project" value="GO_Central"/>
</dbReference>
<dbReference type="GO" id="GO:0043565">
    <property type="term" value="F:sequence-specific DNA binding"/>
    <property type="evidence" value="ECO:0000314"/>
    <property type="project" value="AspGD"/>
</dbReference>
<dbReference type="GO" id="GO:0008270">
    <property type="term" value="F:zinc ion binding"/>
    <property type="evidence" value="ECO:0007669"/>
    <property type="project" value="UniProtKB-KW"/>
</dbReference>
<dbReference type="GO" id="GO:0006879">
    <property type="term" value="P:intracellular iron ion homeostasis"/>
    <property type="evidence" value="ECO:0000315"/>
    <property type="project" value="AspGD"/>
</dbReference>
<dbReference type="GO" id="GO:0034757">
    <property type="term" value="P:negative regulation of iron ion transport"/>
    <property type="evidence" value="ECO:0000315"/>
    <property type="project" value="AspGD"/>
</dbReference>
<dbReference type="GO" id="GO:0000122">
    <property type="term" value="P:negative regulation of transcription by RNA polymerase II"/>
    <property type="evidence" value="ECO:0000318"/>
    <property type="project" value="GO_Central"/>
</dbReference>
<dbReference type="GO" id="GO:0045944">
    <property type="term" value="P:positive regulation of transcription by RNA polymerase II"/>
    <property type="evidence" value="ECO:0000318"/>
    <property type="project" value="GO_Central"/>
</dbReference>
<dbReference type="CDD" id="cd00202">
    <property type="entry name" value="ZnF_GATA"/>
    <property type="match status" value="2"/>
</dbReference>
<dbReference type="FunFam" id="3.30.50.10:FF:000007">
    <property type="entry name" value="Nitrogen regulatory AreA, N-terminal"/>
    <property type="match status" value="1"/>
</dbReference>
<dbReference type="FunFam" id="3.30.50.10:FF:000039">
    <property type="entry name" value="Siderophore transcription factor SreA"/>
    <property type="match status" value="1"/>
</dbReference>
<dbReference type="Gene3D" id="3.30.50.10">
    <property type="entry name" value="Erythroid Transcription Factor GATA-1, subunit A"/>
    <property type="match status" value="2"/>
</dbReference>
<dbReference type="InterPro" id="IPR039355">
    <property type="entry name" value="Transcription_factor_GATA"/>
</dbReference>
<dbReference type="InterPro" id="IPR000679">
    <property type="entry name" value="Znf_GATA"/>
</dbReference>
<dbReference type="InterPro" id="IPR013088">
    <property type="entry name" value="Znf_NHR/GATA"/>
</dbReference>
<dbReference type="PANTHER" id="PTHR10071:SF335">
    <property type="entry name" value="IRON-SENSING TRANSCRIPTIONAL REPRESSOR-RELATED"/>
    <property type="match status" value="1"/>
</dbReference>
<dbReference type="PANTHER" id="PTHR10071">
    <property type="entry name" value="TRANSCRIPTION FACTOR GATA FAMILY MEMBER"/>
    <property type="match status" value="1"/>
</dbReference>
<dbReference type="Pfam" id="PF00320">
    <property type="entry name" value="GATA"/>
    <property type="match status" value="2"/>
</dbReference>
<dbReference type="PRINTS" id="PR00619">
    <property type="entry name" value="GATAZNFINGER"/>
</dbReference>
<dbReference type="SMART" id="SM00401">
    <property type="entry name" value="ZnF_GATA"/>
    <property type="match status" value="2"/>
</dbReference>
<dbReference type="SUPFAM" id="SSF57716">
    <property type="entry name" value="Glucocorticoid receptor-like (DNA-binding domain)"/>
    <property type="match status" value="2"/>
</dbReference>
<dbReference type="PROSITE" id="PS00344">
    <property type="entry name" value="GATA_ZN_FINGER_1"/>
    <property type="match status" value="2"/>
</dbReference>
<dbReference type="PROSITE" id="PS50114">
    <property type="entry name" value="GATA_ZN_FINGER_2"/>
    <property type="match status" value="2"/>
</dbReference>
<reference key="1">
    <citation type="journal article" date="1999" name="J. Biol. Chem.">
        <title>The Aspergillus nidulans GATA factor SREA is involved in regulation of siderophore biosynthesis and control of iron uptake.</title>
        <authorList>
            <person name="Haas H."/>
            <person name="Zadra I."/>
            <person name="Stoffler G."/>
            <person name="Angermayr K."/>
        </authorList>
    </citation>
    <scope>NUCLEOTIDE SEQUENCE [GENOMIC DNA]</scope>
    <scope>INDUCTION</scope>
    <scope>FUNCTION</scope>
    <scope>DISRUPTION PHENOTYPE</scope>
    <source>
        <strain>FGSC A4 / ATCC 38163 / CBS 112.46 / NRRL 194 / M139</strain>
    </source>
</reference>
<reference key="2">
    <citation type="journal article" date="2005" name="Nature">
        <title>Sequencing of Aspergillus nidulans and comparative analysis with A. fumigatus and A. oryzae.</title>
        <authorList>
            <person name="Galagan J.E."/>
            <person name="Calvo S.E."/>
            <person name="Cuomo C."/>
            <person name="Ma L.-J."/>
            <person name="Wortman J.R."/>
            <person name="Batzoglou S."/>
            <person name="Lee S.-I."/>
            <person name="Bastuerkmen M."/>
            <person name="Spevak C.C."/>
            <person name="Clutterbuck J."/>
            <person name="Kapitonov V."/>
            <person name="Jurka J."/>
            <person name="Scazzocchio C."/>
            <person name="Farman M.L."/>
            <person name="Butler J."/>
            <person name="Purcell S."/>
            <person name="Harris S."/>
            <person name="Braus G.H."/>
            <person name="Draht O."/>
            <person name="Busch S."/>
            <person name="D'Enfert C."/>
            <person name="Bouchier C."/>
            <person name="Goldman G.H."/>
            <person name="Bell-Pedersen D."/>
            <person name="Griffiths-Jones S."/>
            <person name="Doonan J.H."/>
            <person name="Yu J."/>
            <person name="Vienken K."/>
            <person name="Pain A."/>
            <person name="Freitag M."/>
            <person name="Selker E.U."/>
            <person name="Archer D.B."/>
            <person name="Penalva M.A."/>
            <person name="Oakley B.R."/>
            <person name="Momany M."/>
            <person name="Tanaka T."/>
            <person name="Kumagai T."/>
            <person name="Asai K."/>
            <person name="Machida M."/>
            <person name="Nierman W.C."/>
            <person name="Denning D.W."/>
            <person name="Caddick M.X."/>
            <person name="Hynes M."/>
            <person name="Paoletti M."/>
            <person name="Fischer R."/>
            <person name="Miller B.L."/>
            <person name="Dyer P.S."/>
            <person name="Sachs M.S."/>
            <person name="Osmani S.A."/>
            <person name="Birren B.W."/>
        </authorList>
    </citation>
    <scope>NUCLEOTIDE SEQUENCE [LARGE SCALE GENOMIC DNA]</scope>
    <source>
        <strain>FGSC A4 / ATCC 38163 / CBS 112.46 / NRRL 194 / M139</strain>
    </source>
</reference>
<reference key="3">
    <citation type="journal article" date="2009" name="Fungal Genet. Biol.">
        <title>The 2008 update of the Aspergillus nidulans genome annotation: a community effort.</title>
        <authorList>
            <person name="Wortman J.R."/>
            <person name="Gilsenan J.M."/>
            <person name="Joardar V."/>
            <person name="Deegan J."/>
            <person name="Clutterbuck J."/>
            <person name="Andersen M.R."/>
            <person name="Archer D."/>
            <person name="Bencina M."/>
            <person name="Braus G."/>
            <person name="Coutinho P."/>
            <person name="von Dohren H."/>
            <person name="Doonan J."/>
            <person name="Driessen A.J."/>
            <person name="Durek P."/>
            <person name="Espeso E."/>
            <person name="Fekete E."/>
            <person name="Flipphi M."/>
            <person name="Estrada C.G."/>
            <person name="Geysens S."/>
            <person name="Goldman G."/>
            <person name="de Groot P.W."/>
            <person name="Hansen K."/>
            <person name="Harris S.D."/>
            <person name="Heinekamp T."/>
            <person name="Helmstaedt K."/>
            <person name="Henrissat B."/>
            <person name="Hofmann G."/>
            <person name="Homan T."/>
            <person name="Horio T."/>
            <person name="Horiuchi H."/>
            <person name="James S."/>
            <person name="Jones M."/>
            <person name="Karaffa L."/>
            <person name="Karanyi Z."/>
            <person name="Kato M."/>
            <person name="Keller N."/>
            <person name="Kelly D.E."/>
            <person name="Kiel J.A."/>
            <person name="Kim J.M."/>
            <person name="van der Klei I.J."/>
            <person name="Klis F.M."/>
            <person name="Kovalchuk A."/>
            <person name="Krasevec N."/>
            <person name="Kubicek C.P."/>
            <person name="Liu B."/>
            <person name="Maccabe A."/>
            <person name="Meyer V."/>
            <person name="Mirabito P."/>
            <person name="Miskei M."/>
            <person name="Mos M."/>
            <person name="Mullins J."/>
            <person name="Nelson D.R."/>
            <person name="Nielsen J."/>
            <person name="Oakley B.R."/>
            <person name="Osmani S.A."/>
            <person name="Pakula T."/>
            <person name="Paszewski A."/>
            <person name="Paulsen I."/>
            <person name="Pilsyk S."/>
            <person name="Pocsi I."/>
            <person name="Punt P.J."/>
            <person name="Ram A.F."/>
            <person name="Ren Q."/>
            <person name="Robellet X."/>
            <person name="Robson G."/>
            <person name="Seiboth B."/>
            <person name="van Solingen P."/>
            <person name="Specht T."/>
            <person name="Sun J."/>
            <person name="Taheri-Talesh N."/>
            <person name="Takeshita N."/>
            <person name="Ussery D."/>
            <person name="vanKuyk P.A."/>
            <person name="Visser H."/>
            <person name="van de Vondervoort P.J."/>
            <person name="de Vries R.P."/>
            <person name="Walton J."/>
            <person name="Xiang X."/>
            <person name="Xiong Y."/>
            <person name="Zeng A.P."/>
            <person name="Brandt B.W."/>
            <person name="Cornell M.J."/>
            <person name="van den Hondel C.A."/>
            <person name="Visser J."/>
            <person name="Oliver S.G."/>
            <person name="Turner G."/>
        </authorList>
    </citation>
    <scope>GENOME REANNOTATION</scope>
    <source>
        <strain>FGSC A4 / ATCC 38163 / CBS 112.46 / NRRL 194 / M139</strain>
    </source>
</reference>
<reference key="4">
    <citation type="journal article" date="2001" name="Mol. Microbiol.">
        <title>SREA is involved in regulation of siderophore biosynthesis, utilization and uptake in Aspergillus nidulans.</title>
        <authorList>
            <person name="Oberegger H."/>
            <person name="Schoeser M."/>
            <person name="Zadra I."/>
            <person name="Abt B."/>
            <person name="Haas H."/>
        </authorList>
    </citation>
    <scope>FUNCTION</scope>
    <scope>DISRUPTION PHENOTYPE</scope>
</reference>
<reference key="5">
    <citation type="journal article" date="2002" name="Biochem. Soc. Trans.">
        <title>Identification of members of the Aspergillus nidulans SREA regulon: genes involved in siderophore biosynthesis and utilization.</title>
        <authorList>
            <person name="Oberegger H."/>
            <person name="Zadra I."/>
            <person name="Schoeser M."/>
            <person name="Abt B."/>
            <person name="Parson W."/>
            <person name="Haas H."/>
        </authorList>
    </citation>
    <scope>FUNCTION</scope>
</reference>
<reference key="6">
    <citation type="journal article" date="2003" name="Biochem. J.">
        <title>Characterization of the Aspergillus nidulans transporters for the siderophores enterobactin and triacetylfusarinine C.</title>
        <authorList>
            <person name="Haas H."/>
            <person name="Schoeser M."/>
            <person name="Lesuisse E."/>
            <person name="Ernst J.F."/>
            <person name="Parson W."/>
            <person name="Abt B."/>
            <person name="Winkelmann G."/>
            <person name="Oberegger H."/>
        </authorList>
    </citation>
    <scope>FUNCTION</scope>
</reference>
<name>SREA_EMENI</name>
<keyword id="KW-0175">Coiled coil</keyword>
<keyword id="KW-0479">Metal-binding</keyword>
<keyword id="KW-0539">Nucleus</keyword>
<keyword id="KW-1185">Reference proteome</keyword>
<keyword id="KW-0677">Repeat</keyword>
<keyword id="KW-0804">Transcription</keyword>
<keyword id="KW-0805">Transcription regulation</keyword>
<keyword id="KW-0862">Zinc</keyword>
<keyword id="KW-0863">Zinc-finger</keyword>
<comment type="function">
    <text evidence="5 6 7 8">GATA-type transcription repressor that regulates iron- acquisition genes through specific binding GATA sequence elements of target promoters (PubMed:11555288, PubMed:9988696). Iron acquisition regulation is critical for survival under both iron-limiting conditions (to acquire essential iron) and iron-replete conditions (to limit iron toxicity) (PubMed:11555288). SreA targets include genes encoding a number of key iron-regulated factors such as those involved in siderophore biosynthesis (PubMed:11555288, PubMed:12196195, PubMed:12487628).</text>
</comment>
<comment type="subcellular location">
    <subcellularLocation>
        <location evidence="10">Nucleus</location>
    </subcellularLocation>
</comment>
<comment type="induction">
    <text evidence="8">Expression is induced in mycelia grown in high iron medium or transferred from low iron medium into high iron medium, and repressed in mycelia grown in low iron medium or transferred from high iron medium into low iron medium (PubMed:9988696).</text>
</comment>
<comment type="domain">
    <text evidence="1">The conserved cystein-rich region (CRR) localized between the zinc fingers is also involved in DNA-binding and transcription repressor activity (By similarity).</text>
</comment>
<comment type="disruption phenotype">
    <text evidence="5 8">Leads to increased iron uptake (PubMed:9988696). leads to partial derepression of triacetylfusarinine C (TAFC) and fusigen production as well as to cellular accumulation of ferricrocin (FC) (PubMed:11555288). Also leads to increased oxidative stress (PubMed:11555288).</text>
</comment>
<protein>
    <recommendedName>
        <fullName evidence="9">GATA-type transcription factor sreA</fullName>
    </recommendedName>
    <alternativeName>
        <fullName evidence="9">Siderophore uptake regulator sreA</fullName>
    </alternativeName>
</protein>
<accession>G5EB20</accession>
<accession>A0A1U8QV15</accession>
<accession>C8VQ32</accession>
<accession>Q5BH04</accession>
<accession>Q9Y754</accession>
<feature type="chain" id="PRO_0000444401" description="GATA-type transcription factor sreA">
    <location>
        <begin position="1"/>
        <end position="549"/>
    </location>
</feature>
<feature type="zinc finger region" description="GATA-type 1" evidence="3">
    <location>
        <begin position="106"/>
        <end position="130"/>
    </location>
</feature>
<feature type="zinc finger region" description="GATA-type 2" evidence="3">
    <location>
        <begin position="251"/>
        <end position="275"/>
    </location>
</feature>
<feature type="region of interest" description="Disordered" evidence="4">
    <location>
        <begin position="40"/>
        <end position="100"/>
    </location>
</feature>
<feature type="region of interest" description="Disordered" evidence="4">
    <location>
        <begin position="141"/>
        <end position="174"/>
    </location>
</feature>
<feature type="region of interest" description="Cystein-rich region (CRR)" evidence="1">
    <location>
        <begin position="180"/>
        <end position="198"/>
    </location>
</feature>
<feature type="region of interest" description="Disordered" evidence="4">
    <location>
        <begin position="223"/>
        <end position="244"/>
    </location>
</feature>
<feature type="region of interest" description="Disordered" evidence="4">
    <location>
        <begin position="306"/>
        <end position="332"/>
    </location>
</feature>
<feature type="region of interest" description="Disordered" evidence="4">
    <location>
        <begin position="375"/>
        <end position="459"/>
    </location>
</feature>
<feature type="region of interest" description="Disordered" evidence="4">
    <location>
        <begin position="482"/>
        <end position="535"/>
    </location>
</feature>
<feature type="coiled-coil region" evidence="2">
    <location>
        <begin position="511"/>
        <end position="549"/>
    </location>
</feature>
<feature type="compositionally biased region" description="Basic and acidic residues" evidence="4">
    <location>
        <begin position="43"/>
        <end position="72"/>
    </location>
</feature>
<feature type="compositionally biased region" description="Basic and acidic residues" evidence="4">
    <location>
        <begin position="86"/>
        <end position="97"/>
    </location>
</feature>
<feature type="compositionally biased region" description="Low complexity" evidence="4">
    <location>
        <begin position="309"/>
        <end position="331"/>
    </location>
</feature>
<feature type="compositionally biased region" description="Pro residues" evidence="4">
    <location>
        <begin position="383"/>
        <end position="396"/>
    </location>
</feature>
<feature type="compositionally biased region" description="Low complexity" evidence="4">
    <location>
        <begin position="485"/>
        <end position="497"/>
    </location>
</feature>
<feature type="compositionally biased region" description="Polar residues" evidence="4">
    <location>
        <begin position="498"/>
        <end position="515"/>
    </location>
</feature>
<feature type="compositionally biased region" description="Basic and acidic residues" evidence="4">
    <location>
        <begin position="516"/>
        <end position="535"/>
    </location>
</feature>
<sequence>MLASIPHMETLRSLPRNPDVVARHPSAEDLDAAQQLISSAQAGREHPQDRHYTDNGSRKSEAGAPHSHHEGEYPIVQTSETPMNGHHVEKTSPKSQKDTSFLGHSCSNCGTKSTPLWRRSPTGAMICNACGLYLKARNVARPTKRNRTQASPEAYHPQNQSVGSQPDPAVTGSEGCTGSCPGGGNCNGTGGAEGCDGCPAYNNRVYKSTARGNVAAHALNRAGNSDAVPSPEAEAPARNSGQPEGNMLVACQNCGTTVTPLWRRDENGHPICNACGLYYKLHGSYRPTTMKKTIIKRRKRVVPALRENSPTAATHSSHGSSASPEASSPATLAYSHDERHRYYSSEPVDQYHRISPAAQRPFGFAPPPVDFTNFNSGAVTLPHHPPPPRLLEPGHPPLSQFARRSISPSSSGNSKKRTLAEAGANTDTGPVPTTLEAGSNQLPPIVSSANPPPPARLSSISSILNHAHARDESRLDPSLAALGRQQQSQPHHPQSSPLAPTQAASQSLPGVSNMDNHVEDRRAKLQREAEEMREQLRAKERELAELAGQ</sequence>